<accession>Q8RUC6</accession>
<accession>O80715</accession>
<accession>P59263</accession>
<accession>Q38875</accession>
<accession>Q9LDJ2</accession>
<accession>Q9LYW1</accession>
<accession>Q9M0W3</accession>
<accession>Q9M1P9</accession>
<accession>Q9S7X3</accession>
<gene>
    <name type="primary">RUB2</name>
    <name type="synonym">UBQ7</name>
    <name type="ordered locus">At2g35635</name>
    <name type="ORF">T20F21.24</name>
</gene>
<feature type="chain" id="PRO_0000396911" description="Ubiquitin">
    <location>
        <begin position="1"/>
        <end position="76"/>
    </location>
</feature>
<feature type="chain" id="PRO_0000035967" description="NEDD8-like protein RUB2">
    <location>
        <begin position="77"/>
        <end position="152"/>
    </location>
</feature>
<feature type="propeptide" id="PRO_0000035968" evidence="4">
    <location>
        <begin position="153"/>
        <end position="154"/>
    </location>
</feature>
<feature type="domain" description="Ubiquitin-like 1" evidence="2">
    <location>
        <begin position="1"/>
        <end position="76"/>
    </location>
</feature>
<feature type="domain" description="Ubiquitin-like 2" evidence="2">
    <location>
        <begin position="77"/>
        <end position="152"/>
    </location>
</feature>
<feature type="cross-link" description="Glycyl lysine isopeptide (Gly-Lys) (interchain with K-? in acceptor proteins)" evidence="2">
    <location>
        <position position="76"/>
    </location>
</feature>
<feature type="cross-link" description="Glycyl lysine isopeptide (Gly-Lys) (interchain with K-? in acceptor proteins)" evidence="2">
    <location>
        <position position="152"/>
    </location>
</feature>
<protein>
    <recommendedName>
        <fullName>Ubiquitin-NEDD8-like protein RUB2</fullName>
    </recommendedName>
    <component>
        <recommendedName>
            <fullName>Ubiquitin</fullName>
        </recommendedName>
    </component>
    <component>
        <recommendedName>
            <fullName>NEDD8-like protein RUB2</fullName>
        </recommendedName>
        <alternativeName>
            <fullName>Ubiquitin-related protein 2</fullName>
            <shortName>AtRUB2</shortName>
        </alternativeName>
    </component>
</protein>
<comment type="function">
    <text evidence="1">Ubiquitin exists either covalently attached to another protein, or free (unanchored). When covalently bound, it is conjugated to target proteins via an isopeptide bond either as a monomer (monoubiquitin), a polymer linked via different Lys residues of the ubiquitin (polyubiquitin chains) or a linear polymer linked via the initiator Met of the ubiquitin (linear polyubiquitin chains). Polyubiquitin chains, when attached to a target protein, have different functions depending on the Lys residue of the ubiquitin that is linked: Lys-11-linked is involved in ERAD (endoplasmic reticulum-associated degradation) and in cell-cycle regulation; Lys-29-linked is involved in lysosomal degradation; Lys-33-linked is involved in kinase modification; Lys-48-linked is involved in protein degradation via the proteasome; Lys-63-linked is involved in endocytosis, and DNA-damage responses. Linear polymer chains formed via attachment by the initiator Met lead to cell signaling. Ubiquitin is usually conjugated to Lys residues of target proteins, however, in rare cases, conjugation to Cys or Ser residues has been observed. When polyubiquitin is free (unanchored-polyubiquitin), it also has distinct roles, such as in activation of protein kinases, and in signaling (By similarity).</text>
</comment>
<comment type="function">
    <molecule>NEDD8-like protein RUB2</molecule>
    <text>Appears to function as a stable post-translational protein modifier.</text>
</comment>
<comment type="subunit">
    <molecule>NEDD8-like protein RUB2</molecule>
    <text evidence="1">Forms a thiol ester with the heterodimer AXR1/ECR1.</text>
</comment>
<comment type="interaction">
    <interactant intactId="EBI-25522172">
        <id>Q8RUC6</id>
    </interactant>
    <interactant intactId="EBI-6860633">
        <id>Q9SII9</id>
        <label>DSK2A</label>
    </interactant>
    <organismsDiffer>false</organismsDiffer>
    <experiments>3</experiments>
</comment>
<comment type="subcellular location">
    <molecule>Ubiquitin</molecule>
    <subcellularLocation>
        <location evidence="1">Cytoplasm</location>
    </subcellularLocation>
    <subcellularLocation>
        <location evidence="1">Nucleus</location>
    </subcellularLocation>
</comment>
<comment type="tissue specificity">
    <text evidence="3">Expressed in leaves, stems and flowers.</text>
</comment>
<comment type="miscellaneous">
    <text>Ubiquitin is encoded by 16 different genes. Ubiquitin is generally synthesized as a polyubiquitin precursor with tandem head to tail repeats. Often, there is one to three additional amino acids after the last repeat, removed in the mature protein. Alternatively, ubiquitin extension protein is synthesized as a single copy of ubiquitin fused to a ribosomal protein (either L40 or S27A) or to a ubiquitin-related protein (either RUB1 or RUB2). Following translation, extension protein is cleaved from ubiquitin.</text>
</comment>
<comment type="similarity">
    <text evidence="4">Belongs to the ubiquitin family.</text>
</comment>
<sequence>MQIFVKTLTGKTITLEVESSDTIDNVKAKIQDKEGIPPDQQRLIFAGKQLEDGRTLADYNIQKESTLHLVLRLRGGTMIKVKTLTGKEIEIDIEPTDTIDRIKERVEEKEGIPPVQQRLIYAGKQLADDKTAKDYAIEGGSVLHLVLALRGGLL</sequence>
<dbReference type="EMBL" id="AC006068">
    <property type="protein sequence ID" value="AAM15116.1"/>
    <property type="molecule type" value="Genomic_DNA"/>
</dbReference>
<dbReference type="EMBL" id="CP002685">
    <property type="protein sequence ID" value="AEC09134.1"/>
    <property type="molecule type" value="Genomic_DNA"/>
</dbReference>
<dbReference type="EMBL" id="AK118678">
    <property type="protein sequence ID" value="BAC43273.1"/>
    <property type="molecule type" value="mRNA"/>
</dbReference>
<dbReference type="EMBL" id="AY074850">
    <property type="protein sequence ID" value="AAL75902.1"/>
    <property type="molecule type" value="mRNA"/>
</dbReference>
<dbReference type="EMBL" id="AY093802">
    <property type="protein sequence ID" value="AAM10418.1"/>
    <property type="molecule type" value="mRNA"/>
</dbReference>
<dbReference type="PIR" id="S55242">
    <property type="entry name" value="S55242"/>
</dbReference>
<dbReference type="RefSeq" id="NP_565812.1">
    <property type="nucleotide sequence ID" value="NM_129118.5"/>
</dbReference>
<dbReference type="SMR" id="Q8RUC6"/>
<dbReference type="BioGRID" id="3477">
    <property type="interactions" value="4"/>
</dbReference>
<dbReference type="FunCoup" id="Q8RUC6">
    <property type="interactions" value="186"/>
</dbReference>
<dbReference type="IntAct" id="Q8RUC6">
    <property type="interactions" value="1"/>
</dbReference>
<dbReference type="STRING" id="3702.Q8RUC6"/>
<dbReference type="iPTMnet" id="Q8RUC6"/>
<dbReference type="PaxDb" id="3702-AT2G35635.1"/>
<dbReference type="ProteomicsDB" id="228037"/>
<dbReference type="EnsemblPlants" id="AT2G35635.1">
    <property type="protein sequence ID" value="AT2G35635.1"/>
    <property type="gene ID" value="AT2G35635"/>
</dbReference>
<dbReference type="GeneID" id="818132"/>
<dbReference type="Gramene" id="AT2G35635.1">
    <property type="protein sequence ID" value="AT2G35635.1"/>
    <property type="gene ID" value="AT2G35635"/>
</dbReference>
<dbReference type="KEGG" id="ath:AT2G35635"/>
<dbReference type="Araport" id="AT2G35635"/>
<dbReference type="TAIR" id="AT2G35635">
    <property type="gene designation" value="UBQ7"/>
</dbReference>
<dbReference type="eggNOG" id="KOG0001">
    <property type="taxonomic scope" value="Eukaryota"/>
</dbReference>
<dbReference type="HOGENOM" id="CLU_010412_0_0_1"/>
<dbReference type="InParanoid" id="Q8RUC6"/>
<dbReference type="OMA" id="CLRGSMQ"/>
<dbReference type="OrthoDB" id="1076642at2759"/>
<dbReference type="PRO" id="PR:Q8RUC6"/>
<dbReference type="Proteomes" id="UP000006548">
    <property type="component" value="Chromosome 2"/>
</dbReference>
<dbReference type="ExpressionAtlas" id="Q8RUC6">
    <property type="expression patterns" value="baseline and differential"/>
</dbReference>
<dbReference type="GO" id="GO:0005783">
    <property type="term" value="C:endoplasmic reticulum"/>
    <property type="evidence" value="ECO:0007005"/>
    <property type="project" value="TAIR"/>
</dbReference>
<dbReference type="GO" id="GO:0005634">
    <property type="term" value="C:nucleus"/>
    <property type="evidence" value="ECO:0007669"/>
    <property type="project" value="UniProtKB-SubCell"/>
</dbReference>
<dbReference type="GO" id="GO:0003729">
    <property type="term" value="F:mRNA binding"/>
    <property type="evidence" value="ECO:0000314"/>
    <property type="project" value="TAIR"/>
</dbReference>
<dbReference type="GO" id="GO:0006511">
    <property type="term" value="P:ubiquitin-dependent protein catabolic process"/>
    <property type="evidence" value="ECO:0000250"/>
    <property type="project" value="TAIR"/>
</dbReference>
<dbReference type="CDD" id="cd01806">
    <property type="entry name" value="Ubl_NEDD8"/>
    <property type="match status" value="1"/>
</dbReference>
<dbReference type="CDD" id="cd01803">
    <property type="entry name" value="Ubl_ubiquitin"/>
    <property type="match status" value="1"/>
</dbReference>
<dbReference type="FunFam" id="3.10.20.90:FF:000023">
    <property type="entry name" value="NEDD8 protein"/>
    <property type="match status" value="1"/>
</dbReference>
<dbReference type="FunFam" id="3.10.20.90:FF:000016">
    <property type="entry name" value="Polyubiquitin 3"/>
    <property type="match status" value="1"/>
</dbReference>
<dbReference type="Gene3D" id="3.10.20.90">
    <property type="entry name" value="Phosphatidylinositol 3-kinase Catalytic Subunit, Chain A, domain 1"/>
    <property type="match status" value="2"/>
</dbReference>
<dbReference type="InterPro" id="IPR038738">
    <property type="entry name" value="Nedd8-like"/>
</dbReference>
<dbReference type="InterPro" id="IPR000626">
    <property type="entry name" value="Ubiquitin-like_dom"/>
</dbReference>
<dbReference type="InterPro" id="IPR029071">
    <property type="entry name" value="Ubiquitin-like_domsf"/>
</dbReference>
<dbReference type="InterPro" id="IPR019954">
    <property type="entry name" value="Ubiquitin_CS"/>
</dbReference>
<dbReference type="InterPro" id="IPR019956">
    <property type="entry name" value="Ubiquitin_dom"/>
</dbReference>
<dbReference type="InterPro" id="IPR050158">
    <property type="entry name" value="Ubiquitin_ubiquitin-like"/>
</dbReference>
<dbReference type="PANTHER" id="PTHR10666">
    <property type="entry name" value="UBIQUITIN"/>
    <property type="match status" value="1"/>
</dbReference>
<dbReference type="Pfam" id="PF00240">
    <property type="entry name" value="ubiquitin"/>
    <property type="match status" value="2"/>
</dbReference>
<dbReference type="PRINTS" id="PR00348">
    <property type="entry name" value="UBIQUITIN"/>
</dbReference>
<dbReference type="SMART" id="SM00213">
    <property type="entry name" value="UBQ"/>
    <property type="match status" value="2"/>
</dbReference>
<dbReference type="SUPFAM" id="SSF54236">
    <property type="entry name" value="Ubiquitin-like"/>
    <property type="match status" value="2"/>
</dbReference>
<dbReference type="PROSITE" id="PS00299">
    <property type="entry name" value="UBIQUITIN_1"/>
    <property type="match status" value="2"/>
</dbReference>
<dbReference type="PROSITE" id="PS50053">
    <property type="entry name" value="UBIQUITIN_2"/>
    <property type="match status" value="2"/>
</dbReference>
<proteinExistence type="evidence at protein level"/>
<name>RUB2_ARATH</name>
<organism>
    <name type="scientific">Arabidopsis thaliana</name>
    <name type="common">Mouse-ear cress</name>
    <dbReference type="NCBI Taxonomy" id="3702"/>
    <lineage>
        <taxon>Eukaryota</taxon>
        <taxon>Viridiplantae</taxon>
        <taxon>Streptophyta</taxon>
        <taxon>Embryophyta</taxon>
        <taxon>Tracheophyta</taxon>
        <taxon>Spermatophyta</taxon>
        <taxon>Magnoliopsida</taxon>
        <taxon>eudicotyledons</taxon>
        <taxon>Gunneridae</taxon>
        <taxon>Pentapetalae</taxon>
        <taxon>rosids</taxon>
        <taxon>malvids</taxon>
        <taxon>Brassicales</taxon>
        <taxon>Brassicaceae</taxon>
        <taxon>Camelineae</taxon>
        <taxon>Arabidopsis</taxon>
    </lineage>
</organism>
<evidence type="ECO:0000250" key="1"/>
<evidence type="ECO:0000255" key="2">
    <source>
        <dbReference type="PROSITE-ProRule" id="PRU00214"/>
    </source>
</evidence>
<evidence type="ECO:0000269" key="3">
    <source>
    </source>
</evidence>
<evidence type="ECO:0000305" key="4"/>
<keyword id="KW-0963">Cytoplasm</keyword>
<keyword id="KW-1017">Isopeptide bond</keyword>
<keyword id="KW-0539">Nucleus</keyword>
<keyword id="KW-1185">Reference proteome</keyword>
<keyword id="KW-0677">Repeat</keyword>
<keyword id="KW-0833">Ubl conjugation pathway</keyword>
<reference key="1">
    <citation type="journal article" date="1999" name="Nature">
        <title>Sequence and analysis of chromosome 2 of the plant Arabidopsis thaliana.</title>
        <authorList>
            <person name="Lin X."/>
            <person name="Kaul S."/>
            <person name="Rounsley S.D."/>
            <person name="Shea T.P."/>
            <person name="Benito M.-I."/>
            <person name="Town C.D."/>
            <person name="Fujii C.Y."/>
            <person name="Mason T.M."/>
            <person name="Bowman C.L."/>
            <person name="Barnstead M.E."/>
            <person name="Feldblyum T.V."/>
            <person name="Buell C.R."/>
            <person name="Ketchum K.A."/>
            <person name="Lee J.J."/>
            <person name="Ronning C.M."/>
            <person name="Koo H.L."/>
            <person name="Moffat K.S."/>
            <person name="Cronin L.A."/>
            <person name="Shen M."/>
            <person name="Pai G."/>
            <person name="Van Aken S."/>
            <person name="Umayam L."/>
            <person name="Tallon L.J."/>
            <person name="Gill J.E."/>
            <person name="Adams M.D."/>
            <person name="Carrera A.J."/>
            <person name="Creasy T.H."/>
            <person name="Goodman H.M."/>
            <person name="Somerville C.R."/>
            <person name="Copenhaver G.P."/>
            <person name="Preuss D."/>
            <person name="Nierman W.C."/>
            <person name="White O."/>
            <person name="Eisen J.A."/>
            <person name="Salzberg S.L."/>
            <person name="Fraser C.M."/>
            <person name="Venter J.C."/>
        </authorList>
    </citation>
    <scope>NUCLEOTIDE SEQUENCE [LARGE SCALE GENOMIC DNA]</scope>
    <source>
        <strain>cv. Columbia</strain>
    </source>
</reference>
<reference key="2">
    <citation type="journal article" date="2017" name="Plant J.">
        <title>Araport11: a complete reannotation of the Arabidopsis thaliana reference genome.</title>
        <authorList>
            <person name="Cheng C.Y."/>
            <person name="Krishnakumar V."/>
            <person name="Chan A.P."/>
            <person name="Thibaud-Nissen F."/>
            <person name="Schobel S."/>
            <person name="Town C.D."/>
        </authorList>
    </citation>
    <scope>GENOME REANNOTATION</scope>
    <source>
        <strain>cv. Columbia</strain>
    </source>
</reference>
<reference key="3">
    <citation type="journal article" date="2002" name="Science">
        <title>Functional annotation of a full-length Arabidopsis cDNA collection.</title>
        <authorList>
            <person name="Seki M."/>
            <person name="Narusaka M."/>
            <person name="Kamiya A."/>
            <person name="Ishida J."/>
            <person name="Satou M."/>
            <person name="Sakurai T."/>
            <person name="Nakajima M."/>
            <person name="Enju A."/>
            <person name="Akiyama K."/>
            <person name="Oono Y."/>
            <person name="Muramatsu M."/>
            <person name="Hayashizaki Y."/>
            <person name="Kawai J."/>
            <person name="Carninci P."/>
            <person name="Itoh M."/>
            <person name="Ishii Y."/>
            <person name="Arakawa T."/>
            <person name="Shibata K."/>
            <person name="Shinagawa A."/>
            <person name="Shinozaki K."/>
        </authorList>
    </citation>
    <scope>NUCLEOTIDE SEQUENCE [LARGE SCALE MRNA]</scope>
    <source>
        <strain>cv. Columbia</strain>
    </source>
</reference>
<reference key="4">
    <citation type="journal article" date="2003" name="Science">
        <title>Empirical analysis of transcriptional activity in the Arabidopsis genome.</title>
        <authorList>
            <person name="Yamada K."/>
            <person name="Lim J."/>
            <person name="Dale J.M."/>
            <person name="Chen H."/>
            <person name="Shinn P."/>
            <person name="Palm C.J."/>
            <person name="Southwick A.M."/>
            <person name="Wu H.C."/>
            <person name="Kim C.J."/>
            <person name="Nguyen M."/>
            <person name="Pham P.K."/>
            <person name="Cheuk R.F."/>
            <person name="Karlin-Newmann G."/>
            <person name="Liu S.X."/>
            <person name="Lam B."/>
            <person name="Sakano H."/>
            <person name="Wu T."/>
            <person name="Yu G."/>
            <person name="Miranda M."/>
            <person name="Quach H.L."/>
            <person name="Tripp M."/>
            <person name="Chang C.H."/>
            <person name="Lee J.M."/>
            <person name="Toriumi M.J."/>
            <person name="Chan M.M."/>
            <person name="Tang C.C."/>
            <person name="Onodera C.S."/>
            <person name="Deng J.M."/>
            <person name="Akiyama K."/>
            <person name="Ansari Y."/>
            <person name="Arakawa T."/>
            <person name="Banh J."/>
            <person name="Banno F."/>
            <person name="Bowser L."/>
            <person name="Brooks S.Y."/>
            <person name="Carninci P."/>
            <person name="Chao Q."/>
            <person name="Choy N."/>
            <person name="Enju A."/>
            <person name="Goldsmith A.D."/>
            <person name="Gurjal M."/>
            <person name="Hansen N.F."/>
            <person name="Hayashizaki Y."/>
            <person name="Johnson-Hopson C."/>
            <person name="Hsuan V.W."/>
            <person name="Iida K."/>
            <person name="Karnes M."/>
            <person name="Khan S."/>
            <person name="Koesema E."/>
            <person name="Ishida J."/>
            <person name="Jiang P.X."/>
            <person name="Jones T."/>
            <person name="Kawai J."/>
            <person name="Kamiya A."/>
            <person name="Meyers C."/>
            <person name="Nakajima M."/>
            <person name="Narusaka M."/>
            <person name="Seki M."/>
            <person name="Sakurai T."/>
            <person name="Satou M."/>
            <person name="Tamse R."/>
            <person name="Vaysberg M."/>
            <person name="Wallender E.K."/>
            <person name="Wong C."/>
            <person name="Yamamura Y."/>
            <person name="Yuan S."/>
            <person name="Shinozaki K."/>
            <person name="Davis R.W."/>
            <person name="Theologis A."/>
            <person name="Ecker J.R."/>
        </authorList>
    </citation>
    <scope>NUCLEOTIDE SEQUENCE [LARGE SCALE MRNA]</scope>
    <source>
        <strain>cv. Columbia</strain>
    </source>
</reference>
<reference key="5">
    <citation type="journal article" date="1998" name="J. Biol. Chem.">
        <title>The rub family of ubiquitin-like proteins. Crystal structure of Arabidopsis rub1 and expression of multiple rubs in Arabidopsis.</title>
        <authorList>
            <person name="Rao-Naik C."/>
            <person name="delaCruz W."/>
            <person name="Laplaza J.M."/>
            <person name="Tan S."/>
            <person name="Callis J."/>
            <person name="Fisher A.J."/>
        </authorList>
    </citation>
    <scope>TISSUE SPECIFICITY</scope>
</reference>